<accession>B1KQL8</accession>
<comment type="function">
    <text evidence="1">Catalyzes oxygen-dependent 5-hydroxyuridine (ho5U) modification at position 34 in tRNAs.</text>
</comment>
<comment type="catalytic activity">
    <reaction evidence="1">
        <text>uridine(34) in tRNA + AH2 + O2 = 5-hydroxyuridine(34) in tRNA + A + H2O</text>
        <dbReference type="Rhea" id="RHEA:64224"/>
        <dbReference type="Rhea" id="RHEA-COMP:11727"/>
        <dbReference type="Rhea" id="RHEA-COMP:13381"/>
        <dbReference type="ChEBI" id="CHEBI:13193"/>
        <dbReference type="ChEBI" id="CHEBI:15377"/>
        <dbReference type="ChEBI" id="CHEBI:15379"/>
        <dbReference type="ChEBI" id="CHEBI:17499"/>
        <dbReference type="ChEBI" id="CHEBI:65315"/>
        <dbReference type="ChEBI" id="CHEBI:136877"/>
    </reaction>
</comment>
<comment type="similarity">
    <text evidence="1">Belongs to the TrhO family.</text>
</comment>
<protein>
    <recommendedName>
        <fullName evidence="1">tRNA uridine(34) hydroxylase</fullName>
        <ecNumber evidence="1">1.14.-.-</ecNumber>
    </recommendedName>
    <alternativeName>
        <fullName evidence="1">tRNA hydroxylation protein O</fullName>
    </alternativeName>
</protein>
<gene>
    <name evidence="1" type="primary">trhO</name>
    <name type="ordered locus">Swoo_1973</name>
</gene>
<evidence type="ECO:0000255" key="1">
    <source>
        <dbReference type="HAMAP-Rule" id="MF_00469"/>
    </source>
</evidence>
<evidence type="ECO:0000256" key="2">
    <source>
        <dbReference type="SAM" id="MobiDB-lite"/>
    </source>
</evidence>
<dbReference type="EC" id="1.14.-.-" evidence="1"/>
<dbReference type="EMBL" id="CP000961">
    <property type="protein sequence ID" value="ACA86257.1"/>
    <property type="molecule type" value="Genomic_DNA"/>
</dbReference>
<dbReference type="RefSeq" id="WP_012324603.1">
    <property type="nucleotide sequence ID" value="NC_010506.1"/>
</dbReference>
<dbReference type="SMR" id="B1KQL8"/>
<dbReference type="STRING" id="392500.Swoo_1973"/>
<dbReference type="KEGG" id="swd:Swoo_1973"/>
<dbReference type="eggNOG" id="COG1054">
    <property type="taxonomic scope" value="Bacteria"/>
</dbReference>
<dbReference type="HOGENOM" id="CLU_038878_0_0_6"/>
<dbReference type="Proteomes" id="UP000002168">
    <property type="component" value="Chromosome"/>
</dbReference>
<dbReference type="GO" id="GO:0016705">
    <property type="term" value="F:oxidoreductase activity, acting on paired donors, with incorporation or reduction of molecular oxygen"/>
    <property type="evidence" value="ECO:0007669"/>
    <property type="project" value="UniProtKB-UniRule"/>
</dbReference>
<dbReference type="GO" id="GO:0006400">
    <property type="term" value="P:tRNA modification"/>
    <property type="evidence" value="ECO:0007669"/>
    <property type="project" value="UniProtKB-UniRule"/>
</dbReference>
<dbReference type="CDD" id="cd01518">
    <property type="entry name" value="RHOD_YceA"/>
    <property type="match status" value="1"/>
</dbReference>
<dbReference type="Gene3D" id="3.30.70.100">
    <property type="match status" value="1"/>
</dbReference>
<dbReference type="Gene3D" id="3.40.250.10">
    <property type="entry name" value="Rhodanese-like domain"/>
    <property type="match status" value="1"/>
</dbReference>
<dbReference type="HAMAP" id="MF_00469">
    <property type="entry name" value="TrhO"/>
    <property type="match status" value="1"/>
</dbReference>
<dbReference type="InterPro" id="IPR001763">
    <property type="entry name" value="Rhodanese-like_dom"/>
</dbReference>
<dbReference type="InterPro" id="IPR036873">
    <property type="entry name" value="Rhodanese-like_dom_sf"/>
</dbReference>
<dbReference type="InterPro" id="IPR020936">
    <property type="entry name" value="TrhO"/>
</dbReference>
<dbReference type="InterPro" id="IPR040503">
    <property type="entry name" value="TRHO_N"/>
</dbReference>
<dbReference type="NCBIfam" id="NF001136">
    <property type="entry name" value="PRK00142.1-4"/>
    <property type="match status" value="1"/>
</dbReference>
<dbReference type="PANTHER" id="PTHR43268:SF3">
    <property type="entry name" value="RHODANESE-LIKE DOMAIN-CONTAINING PROTEIN 7-RELATED"/>
    <property type="match status" value="1"/>
</dbReference>
<dbReference type="PANTHER" id="PTHR43268">
    <property type="entry name" value="THIOSULFATE SULFURTRANSFERASE/RHODANESE-LIKE DOMAIN-CONTAINING PROTEIN 2"/>
    <property type="match status" value="1"/>
</dbReference>
<dbReference type="Pfam" id="PF00581">
    <property type="entry name" value="Rhodanese"/>
    <property type="match status" value="1"/>
</dbReference>
<dbReference type="Pfam" id="PF17773">
    <property type="entry name" value="UPF0176_N"/>
    <property type="match status" value="1"/>
</dbReference>
<dbReference type="SMART" id="SM00450">
    <property type="entry name" value="RHOD"/>
    <property type="match status" value="1"/>
</dbReference>
<dbReference type="SUPFAM" id="SSF52821">
    <property type="entry name" value="Rhodanese/Cell cycle control phosphatase"/>
    <property type="match status" value="1"/>
</dbReference>
<dbReference type="PROSITE" id="PS50206">
    <property type="entry name" value="RHODANESE_3"/>
    <property type="match status" value="1"/>
</dbReference>
<organism>
    <name type="scientific">Shewanella woodyi (strain ATCC 51908 / MS32)</name>
    <dbReference type="NCBI Taxonomy" id="392500"/>
    <lineage>
        <taxon>Bacteria</taxon>
        <taxon>Pseudomonadati</taxon>
        <taxon>Pseudomonadota</taxon>
        <taxon>Gammaproteobacteria</taxon>
        <taxon>Alteromonadales</taxon>
        <taxon>Shewanellaceae</taxon>
        <taxon>Shewanella</taxon>
    </lineage>
</organism>
<proteinExistence type="inferred from homology"/>
<feature type="chain" id="PRO_1000200380" description="tRNA uridine(34) hydroxylase">
    <location>
        <begin position="1"/>
        <end position="332"/>
    </location>
</feature>
<feature type="domain" description="Rhodanese" evidence="1">
    <location>
        <begin position="123"/>
        <end position="217"/>
    </location>
</feature>
<feature type="region of interest" description="Disordered" evidence="2">
    <location>
        <begin position="302"/>
        <end position="332"/>
    </location>
</feature>
<feature type="compositionally biased region" description="Basic and acidic residues" evidence="2">
    <location>
        <begin position="310"/>
        <end position="319"/>
    </location>
</feature>
<feature type="active site" description="Cysteine persulfide intermediate" evidence="1">
    <location>
        <position position="177"/>
    </location>
</feature>
<keyword id="KW-0560">Oxidoreductase</keyword>
<keyword id="KW-1185">Reference proteome</keyword>
<keyword id="KW-0819">tRNA processing</keyword>
<reference key="1">
    <citation type="submission" date="2008-02" db="EMBL/GenBank/DDBJ databases">
        <title>Complete sequence of Shewanella woodyi ATCC 51908.</title>
        <authorList>
            <consortium name="US DOE Joint Genome Institute"/>
            <person name="Copeland A."/>
            <person name="Lucas S."/>
            <person name="Lapidus A."/>
            <person name="Glavina del Rio T."/>
            <person name="Dalin E."/>
            <person name="Tice H."/>
            <person name="Bruce D."/>
            <person name="Goodwin L."/>
            <person name="Pitluck S."/>
            <person name="Sims D."/>
            <person name="Brettin T."/>
            <person name="Detter J.C."/>
            <person name="Han C."/>
            <person name="Kuske C.R."/>
            <person name="Schmutz J."/>
            <person name="Larimer F."/>
            <person name="Land M."/>
            <person name="Hauser L."/>
            <person name="Kyrpides N."/>
            <person name="Lykidis A."/>
            <person name="Zhao J.-S."/>
            <person name="Richardson P."/>
        </authorList>
    </citation>
    <scope>NUCLEOTIDE SEQUENCE [LARGE SCALE GENOMIC DNA]</scope>
    <source>
        <strain>ATCC 51908 / MS32</strain>
    </source>
</reference>
<name>TRHO_SHEWM</name>
<sequence length="332" mass="37607">MSQVVVCALYKFVSLPNFESIQKPLLAHMESAGIKGTLLLASEGINGTVAGSQLAIDNLLQWLAKQDGLDSIVHKLSFDETMPFYRTKVKLKKEIVTMGVEGIDPLKVVGTYVKPKDWNQLISDPEVLLVDTRNEYEVQIGTFKNAVDPKTDTFREFPAYVKEHLDPAKHKKVAMFCTGGIRCEKSTAYLKEQGFDEVYHLEGGVLKYLEEVKQEESLWEGECFVFDNRVAVNHALEKGQYDQCNACRMPITELEKASEAFVQGVSCPHCIDNISEKQRQRFEERERQMQLAAKRGEAHIGSDVGAVIQSRRDNKENLKKSQVKLNNKKYNK</sequence>